<keyword id="KW-0665">Pyrimidine biosynthesis</keyword>
<keyword id="KW-1185">Reference proteome</keyword>
<keyword id="KW-0808">Transferase</keyword>
<gene>
    <name evidence="1" type="primary">pyrB</name>
    <name type="ordered locus">Smar_0601</name>
</gene>
<protein>
    <recommendedName>
        <fullName evidence="1">Aspartate carbamoyltransferase catalytic subunit</fullName>
        <ecNumber evidence="1">2.1.3.2</ecNumber>
    </recommendedName>
    <alternativeName>
        <fullName evidence="1">Aspartate transcarbamylase</fullName>
        <shortName evidence="1">ATCase</shortName>
    </alternativeName>
</protein>
<organism>
    <name type="scientific">Staphylothermus marinus (strain ATCC 43588 / DSM 3639 / JCM 9404 / F1)</name>
    <dbReference type="NCBI Taxonomy" id="399550"/>
    <lineage>
        <taxon>Archaea</taxon>
        <taxon>Thermoproteota</taxon>
        <taxon>Thermoprotei</taxon>
        <taxon>Desulfurococcales</taxon>
        <taxon>Desulfurococcaceae</taxon>
        <taxon>Staphylothermus</taxon>
    </lineage>
</organism>
<evidence type="ECO:0000255" key="1">
    <source>
        <dbReference type="HAMAP-Rule" id="MF_00001"/>
    </source>
</evidence>
<comment type="function">
    <text evidence="1">Catalyzes the condensation of carbamoyl phosphate and aspartate to form carbamoyl aspartate and inorganic phosphate, the committed step in the de novo pyrimidine nucleotide biosynthesis pathway.</text>
</comment>
<comment type="catalytic activity">
    <reaction evidence="1">
        <text>carbamoyl phosphate + L-aspartate = N-carbamoyl-L-aspartate + phosphate + H(+)</text>
        <dbReference type="Rhea" id="RHEA:20013"/>
        <dbReference type="ChEBI" id="CHEBI:15378"/>
        <dbReference type="ChEBI" id="CHEBI:29991"/>
        <dbReference type="ChEBI" id="CHEBI:32814"/>
        <dbReference type="ChEBI" id="CHEBI:43474"/>
        <dbReference type="ChEBI" id="CHEBI:58228"/>
        <dbReference type="EC" id="2.1.3.2"/>
    </reaction>
</comment>
<comment type="pathway">
    <text evidence="1">Pyrimidine metabolism; UMP biosynthesis via de novo pathway; (S)-dihydroorotate from bicarbonate: step 2/3.</text>
</comment>
<comment type="subunit">
    <text evidence="1">Heterooligomer of catalytic and regulatory chains.</text>
</comment>
<comment type="similarity">
    <text evidence="1">Belongs to the aspartate/ornithine carbamoyltransferase superfamily. ATCase family.</text>
</comment>
<sequence>MGFPRGDVLSILDYSRENLEYLFLVADQMEKYLSEKKKLHLLDGYIVALAFLEPSTRTMYSFQSATYRLGGKTLVFTSETATSLAKGENFADTIRMLDSYSDLIVIRSKYEGTARYAAELAENPVINGGDGRHEHPTQAMIDLYTMYKIFGGIDGLTIGILGDLKYARTITSFLYGLTRFKPRKVYLISPGILRLREEVRNKIAELGLSFEETTSLQDVIDELDVLYVTRIQKERYPDPIEYERVKNLYRISIDTLRNVKKEFRILHPLPKIDEIDYRVDETPYAAYFYQAKLGVPLRMALLSLVLGVWRG</sequence>
<proteinExistence type="inferred from homology"/>
<name>PYRB_STAMF</name>
<dbReference type="EC" id="2.1.3.2" evidence="1"/>
<dbReference type="EMBL" id="CP000575">
    <property type="protein sequence ID" value="ABN69708.1"/>
    <property type="molecule type" value="Genomic_DNA"/>
</dbReference>
<dbReference type="RefSeq" id="WP_011838899.1">
    <property type="nucleotide sequence ID" value="NC_009033.1"/>
</dbReference>
<dbReference type="SMR" id="A3DM48"/>
<dbReference type="STRING" id="399550.Smar_0601"/>
<dbReference type="GeneID" id="4907770"/>
<dbReference type="KEGG" id="smr:Smar_0601"/>
<dbReference type="eggNOG" id="arCOG00911">
    <property type="taxonomic scope" value="Archaea"/>
</dbReference>
<dbReference type="HOGENOM" id="CLU_043846_1_2_2"/>
<dbReference type="OrthoDB" id="7792at2157"/>
<dbReference type="UniPathway" id="UPA00070">
    <property type="reaction ID" value="UER00116"/>
</dbReference>
<dbReference type="Proteomes" id="UP000000254">
    <property type="component" value="Chromosome"/>
</dbReference>
<dbReference type="GO" id="GO:0016597">
    <property type="term" value="F:amino acid binding"/>
    <property type="evidence" value="ECO:0007669"/>
    <property type="project" value="InterPro"/>
</dbReference>
<dbReference type="GO" id="GO:0004070">
    <property type="term" value="F:aspartate carbamoyltransferase activity"/>
    <property type="evidence" value="ECO:0007669"/>
    <property type="project" value="UniProtKB-UniRule"/>
</dbReference>
<dbReference type="GO" id="GO:0006207">
    <property type="term" value="P:'de novo' pyrimidine nucleobase biosynthetic process"/>
    <property type="evidence" value="ECO:0007669"/>
    <property type="project" value="InterPro"/>
</dbReference>
<dbReference type="GO" id="GO:0044205">
    <property type="term" value="P:'de novo' UMP biosynthetic process"/>
    <property type="evidence" value="ECO:0007669"/>
    <property type="project" value="UniProtKB-UniRule"/>
</dbReference>
<dbReference type="GO" id="GO:0006520">
    <property type="term" value="P:amino acid metabolic process"/>
    <property type="evidence" value="ECO:0007669"/>
    <property type="project" value="InterPro"/>
</dbReference>
<dbReference type="FunFam" id="3.40.50.1370:FF:000002">
    <property type="entry name" value="Aspartate carbamoyltransferase 2"/>
    <property type="match status" value="1"/>
</dbReference>
<dbReference type="Gene3D" id="3.40.50.1370">
    <property type="entry name" value="Aspartate/ornithine carbamoyltransferase"/>
    <property type="match status" value="2"/>
</dbReference>
<dbReference type="HAMAP" id="MF_00001">
    <property type="entry name" value="Asp_carb_tr"/>
    <property type="match status" value="1"/>
</dbReference>
<dbReference type="InterPro" id="IPR006132">
    <property type="entry name" value="Asp/Orn_carbamoyltranf_P-bd"/>
</dbReference>
<dbReference type="InterPro" id="IPR006130">
    <property type="entry name" value="Asp/Orn_carbamoylTrfase"/>
</dbReference>
<dbReference type="InterPro" id="IPR036901">
    <property type="entry name" value="Asp/Orn_carbamoylTrfase_sf"/>
</dbReference>
<dbReference type="InterPro" id="IPR002082">
    <property type="entry name" value="Asp_carbamoyltransf"/>
</dbReference>
<dbReference type="InterPro" id="IPR006131">
    <property type="entry name" value="Asp_carbamoyltransf_Asp/Orn-bd"/>
</dbReference>
<dbReference type="NCBIfam" id="TIGR00670">
    <property type="entry name" value="asp_carb_tr"/>
    <property type="match status" value="1"/>
</dbReference>
<dbReference type="NCBIfam" id="NF002032">
    <property type="entry name" value="PRK00856.1"/>
    <property type="match status" value="1"/>
</dbReference>
<dbReference type="PANTHER" id="PTHR45753:SF6">
    <property type="entry name" value="ASPARTATE CARBAMOYLTRANSFERASE"/>
    <property type="match status" value="1"/>
</dbReference>
<dbReference type="PANTHER" id="PTHR45753">
    <property type="entry name" value="ORNITHINE CARBAMOYLTRANSFERASE, MITOCHONDRIAL"/>
    <property type="match status" value="1"/>
</dbReference>
<dbReference type="Pfam" id="PF00185">
    <property type="entry name" value="OTCace"/>
    <property type="match status" value="1"/>
</dbReference>
<dbReference type="Pfam" id="PF02729">
    <property type="entry name" value="OTCace_N"/>
    <property type="match status" value="1"/>
</dbReference>
<dbReference type="PRINTS" id="PR00100">
    <property type="entry name" value="AOTCASE"/>
</dbReference>
<dbReference type="PRINTS" id="PR00101">
    <property type="entry name" value="ATCASE"/>
</dbReference>
<dbReference type="SUPFAM" id="SSF53671">
    <property type="entry name" value="Aspartate/ornithine carbamoyltransferase"/>
    <property type="match status" value="1"/>
</dbReference>
<dbReference type="PROSITE" id="PS00097">
    <property type="entry name" value="CARBAMOYLTRANSFERASE"/>
    <property type="match status" value="1"/>
</dbReference>
<feature type="chain" id="PRO_0000301650" description="Aspartate carbamoyltransferase catalytic subunit">
    <location>
        <begin position="1"/>
        <end position="311"/>
    </location>
</feature>
<feature type="binding site" evidence="1">
    <location>
        <position position="57"/>
    </location>
    <ligand>
        <name>carbamoyl phosphate</name>
        <dbReference type="ChEBI" id="CHEBI:58228"/>
    </ligand>
</feature>
<feature type="binding site" evidence="1">
    <location>
        <position position="58"/>
    </location>
    <ligand>
        <name>carbamoyl phosphate</name>
        <dbReference type="ChEBI" id="CHEBI:58228"/>
    </ligand>
</feature>
<feature type="binding site" evidence="1">
    <location>
        <position position="86"/>
    </location>
    <ligand>
        <name>L-aspartate</name>
        <dbReference type="ChEBI" id="CHEBI:29991"/>
    </ligand>
</feature>
<feature type="binding site" evidence="1">
    <location>
        <position position="107"/>
    </location>
    <ligand>
        <name>carbamoyl phosphate</name>
        <dbReference type="ChEBI" id="CHEBI:58228"/>
    </ligand>
</feature>
<feature type="binding site" evidence="1">
    <location>
        <position position="135"/>
    </location>
    <ligand>
        <name>carbamoyl phosphate</name>
        <dbReference type="ChEBI" id="CHEBI:58228"/>
    </ligand>
</feature>
<feature type="binding site" evidence="1">
    <location>
        <position position="138"/>
    </location>
    <ligand>
        <name>carbamoyl phosphate</name>
        <dbReference type="ChEBI" id="CHEBI:58228"/>
    </ligand>
</feature>
<feature type="binding site" evidence="1">
    <location>
        <position position="168"/>
    </location>
    <ligand>
        <name>L-aspartate</name>
        <dbReference type="ChEBI" id="CHEBI:29991"/>
    </ligand>
</feature>
<feature type="binding site" evidence="1">
    <location>
        <position position="230"/>
    </location>
    <ligand>
        <name>L-aspartate</name>
        <dbReference type="ChEBI" id="CHEBI:29991"/>
    </ligand>
</feature>
<feature type="binding site" evidence="1">
    <location>
        <position position="269"/>
    </location>
    <ligand>
        <name>carbamoyl phosphate</name>
        <dbReference type="ChEBI" id="CHEBI:58228"/>
    </ligand>
</feature>
<feature type="binding site" evidence="1">
    <location>
        <position position="270"/>
    </location>
    <ligand>
        <name>carbamoyl phosphate</name>
        <dbReference type="ChEBI" id="CHEBI:58228"/>
    </ligand>
</feature>
<reference key="1">
    <citation type="journal article" date="2009" name="BMC Genomics">
        <title>The complete genome sequence of Staphylothermus marinus reveals differences in sulfur metabolism among heterotrophic Crenarchaeota.</title>
        <authorList>
            <person name="Anderson I.J."/>
            <person name="Dharmarajan L."/>
            <person name="Rodriguez J."/>
            <person name="Hooper S."/>
            <person name="Porat I."/>
            <person name="Ulrich L.E."/>
            <person name="Elkins J.G."/>
            <person name="Mavromatis K."/>
            <person name="Sun H."/>
            <person name="Land M."/>
            <person name="Lapidus A."/>
            <person name="Lucas S."/>
            <person name="Barry K."/>
            <person name="Huber H."/>
            <person name="Zhulin I.B."/>
            <person name="Whitman W.B."/>
            <person name="Mukhopadhyay B."/>
            <person name="Woese C."/>
            <person name="Bristow J."/>
            <person name="Kyrpides N."/>
        </authorList>
    </citation>
    <scope>NUCLEOTIDE SEQUENCE [LARGE SCALE GENOMIC DNA]</scope>
    <source>
        <strain>ATCC 43588 / DSM 3639 / JCM 9404 / F1</strain>
    </source>
</reference>
<reference key="2">
    <citation type="journal article" date="2009" name="Stand. Genomic Sci.">
        <title>Complete genome sequence of Staphylothermus marinus Stetter and Fiala 1986 type strain F1.</title>
        <authorList>
            <person name="Anderson I.J."/>
            <person name="Sun H."/>
            <person name="Lapidus A."/>
            <person name="Copeland A."/>
            <person name="Glavina Del Rio T."/>
            <person name="Tice H."/>
            <person name="Dalin E."/>
            <person name="Lucas S."/>
            <person name="Barry K."/>
            <person name="Land M."/>
            <person name="Richardson P."/>
            <person name="Huber H."/>
            <person name="Kyrpides N.C."/>
        </authorList>
    </citation>
    <scope>NUCLEOTIDE SEQUENCE [LARGE SCALE GENOMIC DNA]</scope>
    <source>
        <strain>ATCC 43588 / DSM 3639 / JCM 9404 / F1</strain>
    </source>
</reference>
<accession>A3DM48</accession>